<proteinExistence type="evidence at protein level"/>
<evidence type="ECO:0000250" key="1">
    <source>
        <dbReference type="UniProtKB" id="O48814"/>
    </source>
</evidence>
<evidence type="ECO:0000255" key="2"/>
<evidence type="ECO:0000255" key="3">
    <source>
        <dbReference type="PROSITE-ProRule" id="PRU00159"/>
    </source>
</evidence>
<evidence type="ECO:0000255" key="4">
    <source>
        <dbReference type="PROSITE-ProRule" id="PRU10027"/>
    </source>
</evidence>
<evidence type="ECO:0000305" key="5"/>
<feature type="signal peptide" evidence="2">
    <location>
        <begin position="1"/>
        <end position="20"/>
    </location>
</feature>
<feature type="chain" id="PRO_0000387528" description="Probable LRR receptor-like serine/threonine-protein kinase At1g51820">
    <location>
        <begin position="21"/>
        <end position="885"/>
    </location>
</feature>
<feature type="topological domain" description="Extracellular" evidence="2">
    <location>
        <begin position="21"/>
        <end position="509"/>
    </location>
</feature>
<feature type="transmembrane region" description="Helical" evidence="2">
    <location>
        <begin position="510"/>
        <end position="530"/>
    </location>
</feature>
<feature type="topological domain" description="Cytoplasmic" evidence="2">
    <location>
        <begin position="531"/>
        <end position="885"/>
    </location>
</feature>
<feature type="repeat" description="LRR 1">
    <location>
        <begin position="403"/>
        <end position="424"/>
    </location>
</feature>
<feature type="repeat" description="LRR 2">
    <location>
        <begin position="427"/>
        <end position="447"/>
    </location>
</feature>
<feature type="repeat" description="LRR 3">
    <location>
        <begin position="451"/>
        <end position="473"/>
    </location>
</feature>
<feature type="domain" description="Protein kinase" evidence="3">
    <location>
        <begin position="578"/>
        <end position="851"/>
    </location>
</feature>
<feature type="active site" description="Proton acceptor" evidence="3 4">
    <location>
        <position position="703"/>
    </location>
</feature>
<feature type="binding site" evidence="3">
    <location>
        <begin position="584"/>
        <end position="592"/>
    </location>
    <ligand>
        <name>ATP</name>
        <dbReference type="ChEBI" id="CHEBI:30616"/>
    </ligand>
</feature>
<feature type="binding site" evidence="3">
    <location>
        <position position="606"/>
    </location>
    <ligand>
        <name>ATP</name>
        <dbReference type="ChEBI" id="CHEBI:30616"/>
    </ligand>
</feature>
<feature type="modified residue" description="Phosphotyrosine" evidence="1">
    <location>
        <position position="651"/>
    </location>
</feature>
<feature type="modified residue" description="Phosphoserine" evidence="1">
    <location>
        <position position="737"/>
    </location>
</feature>
<feature type="modified residue" description="Phosphothreonine" evidence="1">
    <location>
        <position position="738"/>
    </location>
</feature>
<feature type="modified residue" description="Phosphothreonine" evidence="1">
    <location>
        <position position="743"/>
    </location>
</feature>
<feature type="modified residue" description="Phosphotyrosine" evidence="1">
    <location>
        <position position="751"/>
    </location>
</feature>
<feature type="glycosylation site" description="N-linked (GlcNAc...) asparagine" evidence="2">
    <location>
        <position position="22"/>
    </location>
</feature>
<feature type="glycosylation site" description="N-linked (GlcNAc...) asparagine" evidence="2">
    <location>
        <position position="93"/>
    </location>
</feature>
<feature type="glycosylation site" description="N-linked (GlcNAc...) asparagine" evidence="2">
    <location>
        <position position="135"/>
    </location>
</feature>
<feature type="glycosylation site" description="N-linked (GlcNAc...) asparagine" evidence="2">
    <location>
        <position position="194"/>
    </location>
</feature>
<feature type="glycosylation site" description="N-linked (GlcNAc...) asparagine" evidence="2">
    <location>
        <position position="228"/>
    </location>
</feature>
<feature type="glycosylation site" description="N-linked (GlcNAc...) asparagine" evidence="2">
    <location>
        <position position="250"/>
    </location>
</feature>
<feature type="glycosylation site" description="N-linked (GlcNAc...) asparagine" evidence="2">
    <location>
        <position position="254"/>
    </location>
</feature>
<feature type="glycosylation site" description="N-linked (GlcNAc...) asparagine" evidence="2">
    <location>
        <position position="281"/>
    </location>
</feature>
<feature type="glycosylation site" description="N-linked (GlcNAc...) asparagine" evidence="2">
    <location>
        <position position="287"/>
    </location>
</feature>
<feature type="glycosylation site" description="N-linked (GlcNAc...) asparagine" evidence="2">
    <location>
        <position position="424"/>
    </location>
</feature>
<feature type="glycosylation site" description="N-linked (GlcNAc...) asparagine" evidence="2">
    <location>
        <position position="437"/>
    </location>
</feature>
<feature type="glycosylation site" description="N-linked (GlcNAc...) asparagine" evidence="2">
    <location>
        <position position="456"/>
    </location>
</feature>
<feature type="glycosylation site" description="N-linked (GlcNAc...) asparagine" evidence="2">
    <location>
        <position position="461"/>
    </location>
</feature>
<accession>C0LGG3</accession>
<accession>Q9C8I9</accession>
<accession>Q9FZB7</accession>
<organism>
    <name type="scientific">Arabidopsis thaliana</name>
    <name type="common">Mouse-ear cress</name>
    <dbReference type="NCBI Taxonomy" id="3702"/>
    <lineage>
        <taxon>Eukaryota</taxon>
        <taxon>Viridiplantae</taxon>
        <taxon>Streptophyta</taxon>
        <taxon>Embryophyta</taxon>
        <taxon>Tracheophyta</taxon>
        <taxon>Spermatophyta</taxon>
        <taxon>Magnoliopsida</taxon>
        <taxon>eudicotyledons</taxon>
        <taxon>Gunneridae</taxon>
        <taxon>Pentapetalae</taxon>
        <taxon>rosids</taxon>
        <taxon>malvids</taxon>
        <taxon>Brassicales</taxon>
        <taxon>Brassicaceae</taxon>
        <taxon>Camelineae</taxon>
        <taxon>Arabidopsis</taxon>
    </lineage>
</organism>
<sequence>MERHFVFIATYLLIFHLVQAQNQTGFISVDCGLSLLESPYDAPQTGLTYTSDADLVASGKTGRLAKEFEPLVDKPTLTLRYFPEGVRNCYNLNVTSDTNYLIKATFVYGNYDGLNVGPNFNLYLGPNLWTTVSSNDTIEEIILVTRSNSLQVCLVKTGISIPFINMLELRPMKKNMYVTQSGSLKYLFRGYISNSSTRIRFPDDVYDRKWYPLFDDSWTQVTTNLKVNTSITYELPQSVMAKAATPIKANDTLNITWTVEPPTTQFYSYVHIAEIQALRANETREFNVTLNGEYTFGPFSPIPLKTASIVDLSPGQCDGGRCILQVVKTLKSTLPPLLNAIEAFTVIDFPQMETNENDVAGIKNVQGTYGLSRISWQGDPCVPKQLLWDGLNCKNSDISTPPIITSLDLSSSGLTGIITQAIKNLTHLQILDLSDNNLTGEVPEFLADIKSLLVINLSGNNLSGSVPPSLLQKKGMKLNVEGNPHILCTTGSCVKKKEDGHKKKSVIVPVVASIASIAVLIGALVLFLILRKKRSPKVEGPPPSYMQASDGRLPRSSEPAIVTKNRRFSYSQVVIMTNNFQRILGKGGFGMVYHGFVNGTEQVAVKILSHSSSQGYKQFKAEVELLLRVHHKNLVGLVGYCDEGDNLALIYEYMANGDLKEHMSGTRNRFILNWGTRLKIVIESAQGLEYLHNGCKPPMVHRDVKTTNILLNEHFEAKLADFGLSRSFLIEGETHVSTVVAGTPGYLDPEYHRTNWLTEKSDVYSFGILLLEIITNRHVIDQSREKPHIGEWVGVMLTKGDIQSIMDPSLNEDYDSGSVWKAVELAMSCLNHSSARRPTMSQVVIELNECLASENARGGASRDMESKSSIEVSLTFGTEVSPNAR</sequence>
<keyword id="KW-0067">ATP-binding</keyword>
<keyword id="KW-0325">Glycoprotein</keyword>
<keyword id="KW-0418">Kinase</keyword>
<keyword id="KW-0433">Leucine-rich repeat</keyword>
<keyword id="KW-0472">Membrane</keyword>
<keyword id="KW-0547">Nucleotide-binding</keyword>
<keyword id="KW-0597">Phosphoprotein</keyword>
<keyword id="KW-0675">Receptor</keyword>
<keyword id="KW-1185">Reference proteome</keyword>
<keyword id="KW-0677">Repeat</keyword>
<keyword id="KW-0723">Serine/threonine-protein kinase</keyword>
<keyword id="KW-0732">Signal</keyword>
<keyword id="KW-0808">Transferase</keyword>
<keyword id="KW-0812">Transmembrane</keyword>
<keyword id="KW-1133">Transmembrane helix</keyword>
<comment type="catalytic activity">
    <reaction>
        <text>L-seryl-[protein] + ATP = O-phospho-L-seryl-[protein] + ADP + H(+)</text>
        <dbReference type="Rhea" id="RHEA:17989"/>
        <dbReference type="Rhea" id="RHEA-COMP:9863"/>
        <dbReference type="Rhea" id="RHEA-COMP:11604"/>
        <dbReference type="ChEBI" id="CHEBI:15378"/>
        <dbReference type="ChEBI" id="CHEBI:29999"/>
        <dbReference type="ChEBI" id="CHEBI:30616"/>
        <dbReference type="ChEBI" id="CHEBI:83421"/>
        <dbReference type="ChEBI" id="CHEBI:456216"/>
        <dbReference type="EC" id="2.7.11.1"/>
    </reaction>
</comment>
<comment type="catalytic activity">
    <reaction>
        <text>L-threonyl-[protein] + ATP = O-phospho-L-threonyl-[protein] + ADP + H(+)</text>
        <dbReference type="Rhea" id="RHEA:46608"/>
        <dbReference type="Rhea" id="RHEA-COMP:11060"/>
        <dbReference type="Rhea" id="RHEA-COMP:11605"/>
        <dbReference type="ChEBI" id="CHEBI:15378"/>
        <dbReference type="ChEBI" id="CHEBI:30013"/>
        <dbReference type="ChEBI" id="CHEBI:30616"/>
        <dbReference type="ChEBI" id="CHEBI:61977"/>
        <dbReference type="ChEBI" id="CHEBI:456216"/>
        <dbReference type="EC" id="2.7.11.1"/>
    </reaction>
</comment>
<comment type="interaction">
    <interactant intactId="EBI-17066817">
        <id>C0LGG3</id>
    </interactant>
    <interactant intactId="EBI-20653342">
        <id>A0A178UFM8</id>
        <label>At5g51560</label>
    </interactant>
    <organismsDiffer>false</organismsDiffer>
    <experiments>3</experiments>
</comment>
<comment type="interaction">
    <interactant intactId="EBI-17066817">
        <id>C0LGG3</id>
    </interactant>
    <interactant intactId="EBI-20655829">
        <id>A0A178VQN9</id>
        <label>AXX17_At2g39620</label>
    </interactant>
    <organismsDiffer>false</organismsDiffer>
    <experiments>2</experiments>
</comment>
<comment type="interaction">
    <interactant intactId="EBI-17066817">
        <id>C0LGG3</id>
    </interactant>
    <interactant intactId="EBI-1646111">
        <id>Q9SYQ8</id>
        <label>CLV1</label>
    </interactant>
    <organismsDiffer>false</organismsDiffer>
    <experiments>3</experiments>
</comment>
<comment type="interaction">
    <interactant intactId="EBI-17066817">
        <id>C0LGG3</id>
    </interactant>
    <interactant intactId="EBI-17071528">
        <id>Q9FRI1</id>
        <label>LRR-RLK</label>
    </interactant>
    <organismsDiffer>false</organismsDiffer>
    <experiments>3</experiments>
</comment>
<comment type="interaction">
    <interactant intactId="EBI-17066817">
        <id>C0LGG3</id>
    </interactant>
    <interactant intactId="EBI-1238200">
        <id>Q9LZV7</id>
        <label>PXC2</label>
    </interactant>
    <organismsDiffer>false</organismsDiffer>
    <experiments>3</experiments>
</comment>
<comment type="subcellular location">
    <subcellularLocation>
        <location evidence="5">Membrane</location>
        <topology evidence="5">Single-pass type I membrane protein</topology>
    </subcellularLocation>
</comment>
<comment type="similarity">
    <text evidence="3">Belongs to the protein kinase superfamily. Ser/Thr protein kinase family.</text>
</comment>
<comment type="sequence caution" evidence="5">
    <conflict type="erroneous gene model prediction">
        <sequence resource="EMBL-CDS" id="AAF99853"/>
    </conflict>
</comment>
<comment type="sequence caution" evidence="5">
    <conflict type="erroneous gene model prediction">
        <sequence resource="EMBL-CDS" id="AAG50887"/>
    </conflict>
</comment>
<dbReference type="EC" id="2.7.11.1"/>
<dbReference type="EMBL" id="AC015448">
    <property type="protein sequence ID" value="AAF99853.1"/>
    <property type="status" value="ALT_SEQ"/>
    <property type="molecule type" value="Genomic_DNA"/>
</dbReference>
<dbReference type="EMBL" id="AC025294">
    <property type="protein sequence ID" value="AAG50887.1"/>
    <property type="status" value="ALT_SEQ"/>
    <property type="molecule type" value="Genomic_DNA"/>
</dbReference>
<dbReference type="EMBL" id="CP002684">
    <property type="protein sequence ID" value="AEE32721.1"/>
    <property type="molecule type" value="Genomic_DNA"/>
</dbReference>
<dbReference type="EMBL" id="FJ708652">
    <property type="protein sequence ID" value="ACN59248.1"/>
    <property type="molecule type" value="mRNA"/>
</dbReference>
<dbReference type="PIR" id="E96557">
    <property type="entry name" value="E96557"/>
</dbReference>
<dbReference type="RefSeq" id="NP_175594.2">
    <property type="nucleotide sequence ID" value="NM_104062.3"/>
</dbReference>
<dbReference type="SMR" id="C0LGG3"/>
<dbReference type="BioGRID" id="26834">
    <property type="interactions" value="27"/>
</dbReference>
<dbReference type="IntAct" id="C0LGG3">
    <property type="interactions" value="32"/>
</dbReference>
<dbReference type="STRING" id="3702.C0LGG3"/>
<dbReference type="GlyGen" id="C0LGG3">
    <property type="glycosylation" value="14 sites"/>
</dbReference>
<dbReference type="PaxDb" id="3702-AT1G51820.1"/>
<dbReference type="ProteomicsDB" id="243012"/>
<dbReference type="EnsemblPlants" id="AT1G51820.1">
    <property type="protein sequence ID" value="AT1G51820.1"/>
    <property type="gene ID" value="AT1G51820"/>
</dbReference>
<dbReference type="GeneID" id="841609"/>
<dbReference type="Gramene" id="AT1G51820.1">
    <property type="protein sequence ID" value="AT1G51820.1"/>
    <property type="gene ID" value="AT1G51820"/>
</dbReference>
<dbReference type="KEGG" id="ath:AT1G51820"/>
<dbReference type="Araport" id="AT1G51820"/>
<dbReference type="TAIR" id="AT1G51820">
    <property type="gene designation" value="SIF4"/>
</dbReference>
<dbReference type="eggNOG" id="ENOG502QQCZ">
    <property type="taxonomic scope" value="Eukaryota"/>
</dbReference>
<dbReference type="HOGENOM" id="CLU_000288_41_1_1"/>
<dbReference type="InParanoid" id="C0LGG3"/>
<dbReference type="PhylomeDB" id="C0LGG3"/>
<dbReference type="PRO" id="PR:C0LGG3"/>
<dbReference type="Proteomes" id="UP000006548">
    <property type="component" value="Chromosome 1"/>
</dbReference>
<dbReference type="ExpressionAtlas" id="C0LGG3">
    <property type="expression patterns" value="baseline and differential"/>
</dbReference>
<dbReference type="GO" id="GO:0016020">
    <property type="term" value="C:membrane"/>
    <property type="evidence" value="ECO:0007669"/>
    <property type="project" value="UniProtKB-SubCell"/>
</dbReference>
<dbReference type="GO" id="GO:0005524">
    <property type="term" value="F:ATP binding"/>
    <property type="evidence" value="ECO:0007669"/>
    <property type="project" value="UniProtKB-KW"/>
</dbReference>
<dbReference type="GO" id="GO:0106310">
    <property type="term" value="F:protein serine kinase activity"/>
    <property type="evidence" value="ECO:0007669"/>
    <property type="project" value="RHEA"/>
</dbReference>
<dbReference type="GO" id="GO:0004674">
    <property type="term" value="F:protein serine/threonine kinase activity"/>
    <property type="evidence" value="ECO:0007669"/>
    <property type="project" value="UniProtKB-KW"/>
</dbReference>
<dbReference type="CDD" id="cd14066">
    <property type="entry name" value="STKc_IRAK"/>
    <property type="match status" value="1"/>
</dbReference>
<dbReference type="FunFam" id="3.80.10.10:FF:000129">
    <property type="entry name" value="Leucine-rich repeat receptor-like kinase"/>
    <property type="match status" value="1"/>
</dbReference>
<dbReference type="FunFam" id="3.30.200.20:FF:000394">
    <property type="entry name" value="Leucine-rich repeat receptor-like protein kinase"/>
    <property type="match status" value="1"/>
</dbReference>
<dbReference type="FunFam" id="1.10.510.10:FF:000146">
    <property type="entry name" value="LRR receptor-like serine/threonine-protein kinase IOS1"/>
    <property type="match status" value="1"/>
</dbReference>
<dbReference type="Gene3D" id="3.30.200.20">
    <property type="entry name" value="Phosphorylase Kinase, domain 1"/>
    <property type="match status" value="1"/>
</dbReference>
<dbReference type="Gene3D" id="3.80.10.10">
    <property type="entry name" value="Ribonuclease Inhibitor"/>
    <property type="match status" value="1"/>
</dbReference>
<dbReference type="Gene3D" id="1.10.510.10">
    <property type="entry name" value="Transferase(Phosphotransferase) domain 1"/>
    <property type="match status" value="1"/>
</dbReference>
<dbReference type="InterPro" id="IPR011009">
    <property type="entry name" value="Kinase-like_dom_sf"/>
</dbReference>
<dbReference type="InterPro" id="IPR001611">
    <property type="entry name" value="Leu-rich_rpt"/>
</dbReference>
<dbReference type="InterPro" id="IPR032675">
    <property type="entry name" value="LRR_dom_sf"/>
</dbReference>
<dbReference type="InterPro" id="IPR024788">
    <property type="entry name" value="Malectin-like_Carb-bd_dom"/>
</dbReference>
<dbReference type="InterPro" id="IPR000719">
    <property type="entry name" value="Prot_kinase_dom"/>
</dbReference>
<dbReference type="InterPro" id="IPR017441">
    <property type="entry name" value="Protein_kinase_ATP_BS"/>
</dbReference>
<dbReference type="InterPro" id="IPR008271">
    <property type="entry name" value="Ser/Thr_kinase_AS"/>
</dbReference>
<dbReference type="PANTHER" id="PTHR45631:SF86">
    <property type="entry name" value="LEUCINE-RICH REPEAT PROTEIN KINASE FAMILY PROTEIN"/>
    <property type="match status" value="1"/>
</dbReference>
<dbReference type="PANTHER" id="PTHR45631">
    <property type="entry name" value="OS07G0107800 PROTEIN-RELATED"/>
    <property type="match status" value="1"/>
</dbReference>
<dbReference type="Pfam" id="PF13855">
    <property type="entry name" value="LRR_8"/>
    <property type="match status" value="1"/>
</dbReference>
<dbReference type="Pfam" id="PF12819">
    <property type="entry name" value="Malectin_like"/>
    <property type="match status" value="1"/>
</dbReference>
<dbReference type="Pfam" id="PF00069">
    <property type="entry name" value="Pkinase"/>
    <property type="match status" value="1"/>
</dbReference>
<dbReference type="SMART" id="SM00220">
    <property type="entry name" value="S_TKc"/>
    <property type="match status" value="1"/>
</dbReference>
<dbReference type="SUPFAM" id="SSF52058">
    <property type="entry name" value="L domain-like"/>
    <property type="match status" value="1"/>
</dbReference>
<dbReference type="SUPFAM" id="SSF56112">
    <property type="entry name" value="Protein kinase-like (PK-like)"/>
    <property type="match status" value="1"/>
</dbReference>
<dbReference type="PROSITE" id="PS00107">
    <property type="entry name" value="PROTEIN_KINASE_ATP"/>
    <property type="match status" value="1"/>
</dbReference>
<dbReference type="PROSITE" id="PS50011">
    <property type="entry name" value="PROTEIN_KINASE_DOM"/>
    <property type="match status" value="1"/>
</dbReference>
<dbReference type="PROSITE" id="PS00108">
    <property type="entry name" value="PROTEIN_KINASE_ST"/>
    <property type="match status" value="1"/>
</dbReference>
<reference key="1">
    <citation type="journal article" date="2000" name="Nature">
        <title>Sequence and analysis of chromosome 1 of the plant Arabidopsis thaliana.</title>
        <authorList>
            <person name="Theologis A."/>
            <person name="Ecker J.R."/>
            <person name="Palm C.J."/>
            <person name="Federspiel N.A."/>
            <person name="Kaul S."/>
            <person name="White O."/>
            <person name="Alonso J."/>
            <person name="Altafi H."/>
            <person name="Araujo R."/>
            <person name="Bowman C.L."/>
            <person name="Brooks S.Y."/>
            <person name="Buehler E."/>
            <person name="Chan A."/>
            <person name="Chao Q."/>
            <person name="Chen H."/>
            <person name="Cheuk R.F."/>
            <person name="Chin C.W."/>
            <person name="Chung M.K."/>
            <person name="Conn L."/>
            <person name="Conway A.B."/>
            <person name="Conway A.R."/>
            <person name="Creasy T.H."/>
            <person name="Dewar K."/>
            <person name="Dunn P."/>
            <person name="Etgu P."/>
            <person name="Feldblyum T.V."/>
            <person name="Feng J.-D."/>
            <person name="Fong B."/>
            <person name="Fujii C.Y."/>
            <person name="Gill J.E."/>
            <person name="Goldsmith A.D."/>
            <person name="Haas B."/>
            <person name="Hansen N.F."/>
            <person name="Hughes B."/>
            <person name="Huizar L."/>
            <person name="Hunter J.L."/>
            <person name="Jenkins J."/>
            <person name="Johnson-Hopson C."/>
            <person name="Khan S."/>
            <person name="Khaykin E."/>
            <person name="Kim C.J."/>
            <person name="Koo H.L."/>
            <person name="Kremenetskaia I."/>
            <person name="Kurtz D.B."/>
            <person name="Kwan A."/>
            <person name="Lam B."/>
            <person name="Langin-Hooper S."/>
            <person name="Lee A."/>
            <person name="Lee J.M."/>
            <person name="Lenz C.A."/>
            <person name="Li J.H."/>
            <person name="Li Y.-P."/>
            <person name="Lin X."/>
            <person name="Liu S.X."/>
            <person name="Liu Z.A."/>
            <person name="Luros J.S."/>
            <person name="Maiti R."/>
            <person name="Marziali A."/>
            <person name="Militscher J."/>
            <person name="Miranda M."/>
            <person name="Nguyen M."/>
            <person name="Nierman W.C."/>
            <person name="Osborne B.I."/>
            <person name="Pai G."/>
            <person name="Peterson J."/>
            <person name="Pham P.K."/>
            <person name="Rizzo M."/>
            <person name="Rooney T."/>
            <person name="Rowley D."/>
            <person name="Sakano H."/>
            <person name="Salzberg S.L."/>
            <person name="Schwartz J.R."/>
            <person name="Shinn P."/>
            <person name="Southwick A.M."/>
            <person name="Sun H."/>
            <person name="Tallon L.J."/>
            <person name="Tambunga G."/>
            <person name="Toriumi M.J."/>
            <person name="Town C.D."/>
            <person name="Utterback T."/>
            <person name="Van Aken S."/>
            <person name="Vaysberg M."/>
            <person name="Vysotskaia V.S."/>
            <person name="Walker M."/>
            <person name="Wu D."/>
            <person name="Yu G."/>
            <person name="Fraser C.M."/>
            <person name="Venter J.C."/>
            <person name="Davis R.W."/>
        </authorList>
    </citation>
    <scope>NUCLEOTIDE SEQUENCE [LARGE SCALE GENOMIC DNA]</scope>
    <source>
        <strain>cv. Columbia</strain>
    </source>
</reference>
<reference key="2">
    <citation type="journal article" date="2017" name="Plant J.">
        <title>Araport11: a complete reannotation of the Arabidopsis thaliana reference genome.</title>
        <authorList>
            <person name="Cheng C.Y."/>
            <person name="Krishnakumar V."/>
            <person name="Chan A.P."/>
            <person name="Thibaud-Nissen F."/>
            <person name="Schobel S."/>
            <person name="Town C.D."/>
        </authorList>
    </citation>
    <scope>GENOME REANNOTATION</scope>
    <source>
        <strain>cv. Columbia</strain>
    </source>
</reference>
<reference key="3">
    <citation type="journal article" date="2010" name="BMC Genomics">
        <title>Genome-wide cloning and sequence analysis of leucine-rich repeat receptor-like protein kinase genes in Arabidopsis thaliana.</title>
        <authorList>
            <person name="Gou X."/>
            <person name="He K."/>
            <person name="Yang H."/>
            <person name="Yuan T."/>
            <person name="Lin H."/>
            <person name="Clouse S.D."/>
            <person name="Li J."/>
        </authorList>
    </citation>
    <scope>NUCLEOTIDE SEQUENCE [LARGE SCALE MRNA]</scope>
    <source>
        <strain>cv. Columbia</strain>
    </source>
</reference>
<gene>
    <name type="ordered locus">At1g51820</name>
    <name type="ORF">F19C24.23</name>
    <name type="ORF">T14L22.3</name>
</gene>
<protein>
    <recommendedName>
        <fullName>Probable LRR receptor-like serine/threonine-protein kinase At1g51820</fullName>
        <ecNumber>2.7.11.1</ecNumber>
    </recommendedName>
</protein>
<name>Y5182_ARATH</name>